<comment type="function">
    <text evidence="1">Could be involved in insertion of integral membrane proteins into the membrane.</text>
</comment>
<comment type="subcellular location">
    <subcellularLocation>
        <location evidence="1">Cell membrane</location>
        <topology evidence="1">Peripheral membrane protein</topology>
        <orientation evidence="1">Cytoplasmic side</orientation>
    </subcellularLocation>
</comment>
<comment type="similarity">
    <text evidence="1">Belongs to the UPF0161 family.</text>
</comment>
<name>YIDD_STAES</name>
<keyword id="KW-1003">Cell membrane</keyword>
<keyword id="KW-0472">Membrane</keyword>
<feature type="chain" id="PRO_0000171872" description="Putative membrane protein insertion efficiency factor">
    <location>
        <begin position="1"/>
        <end position="83"/>
    </location>
</feature>
<feature type="region of interest" description="Disordered" evidence="2">
    <location>
        <begin position="64"/>
        <end position="83"/>
    </location>
</feature>
<evidence type="ECO:0000255" key="1">
    <source>
        <dbReference type="HAMAP-Rule" id="MF_00386"/>
    </source>
</evidence>
<evidence type="ECO:0000256" key="2">
    <source>
        <dbReference type="SAM" id="MobiDB-lite"/>
    </source>
</evidence>
<gene>
    <name type="ordered locus">SE_1462</name>
</gene>
<dbReference type="EMBL" id="AE015929">
    <property type="protein sequence ID" value="AAO05061.1"/>
    <property type="molecule type" value="Genomic_DNA"/>
</dbReference>
<dbReference type="RefSeq" id="NP_765017.1">
    <property type="nucleotide sequence ID" value="NC_004461.1"/>
</dbReference>
<dbReference type="KEGG" id="sep:SE_1462"/>
<dbReference type="PATRIC" id="fig|176280.10.peg.1428"/>
<dbReference type="eggNOG" id="COG0759">
    <property type="taxonomic scope" value="Bacteria"/>
</dbReference>
<dbReference type="HOGENOM" id="CLU_144811_6_0_9"/>
<dbReference type="OrthoDB" id="9801753at2"/>
<dbReference type="Proteomes" id="UP000001411">
    <property type="component" value="Chromosome"/>
</dbReference>
<dbReference type="GO" id="GO:0005886">
    <property type="term" value="C:plasma membrane"/>
    <property type="evidence" value="ECO:0007669"/>
    <property type="project" value="UniProtKB-SubCell"/>
</dbReference>
<dbReference type="HAMAP" id="MF_00386">
    <property type="entry name" value="UPF0161_YidD"/>
    <property type="match status" value="1"/>
</dbReference>
<dbReference type="InterPro" id="IPR002696">
    <property type="entry name" value="Membr_insert_effic_factor_YidD"/>
</dbReference>
<dbReference type="NCBIfam" id="TIGR00278">
    <property type="entry name" value="membrane protein insertion efficiency factor YidD"/>
    <property type="match status" value="1"/>
</dbReference>
<dbReference type="PANTHER" id="PTHR33383">
    <property type="entry name" value="MEMBRANE PROTEIN INSERTION EFFICIENCY FACTOR-RELATED"/>
    <property type="match status" value="1"/>
</dbReference>
<dbReference type="PANTHER" id="PTHR33383:SF1">
    <property type="entry name" value="MEMBRANE PROTEIN INSERTION EFFICIENCY FACTOR-RELATED"/>
    <property type="match status" value="1"/>
</dbReference>
<dbReference type="Pfam" id="PF01809">
    <property type="entry name" value="YidD"/>
    <property type="match status" value="1"/>
</dbReference>
<dbReference type="SMART" id="SM01234">
    <property type="entry name" value="Haemolytic"/>
    <property type="match status" value="1"/>
</dbReference>
<protein>
    <recommendedName>
        <fullName evidence="1">Putative membrane protein insertion efficiency factor</fullName>
    </recommendedName>
</protein>
<accession>Q8CS22</accession>
<proteinExistence type="inferred from homology"/>
<organism>
    <name type="scientific">Staphylococcus epidermidis (strain ATCC 12228 / FDA PCI 1200)</name>
    <dbReference type="NCBI Taxonomy" id="176280"/>
    <lineage>
        <taxon>Bacteria</taxon>
        <taxon>Bacillati</taxon>
        <taxon>Bacillota</taxon>
        <taxon>Bacilli</taxon>
        <taxon>Bacillales</taxon>
        <taxon>Staphylococcaceae</taxon>
        <taxon>Staphylococcus</taxon>
    </lineage>
</organism>
<reference key="1">
    <citation type="journal article" date="2003" name="Mol. Microbiol.">
        <title>Genome-based analysis of virulence genes in a non-biofilm-forming Staphylococcus epidermidis strain (ATCC 12228).</title>
        <authorList>
            <person name="Zhang Y.-Q."/>
            <person name="Ren S.-X."/>
            <person name="Li H.-L."/>
            <person name="Wang Y.-X."/>
            <person name="Fu G."/>
            <person name="Yang J."/>
            <person name="Qin Z.-Q."/>
            <person name="Miao Y.-G."/>
            <person name="Wang W.-Y."/>
            <person name="Chen R.-S."/>
            <person name="Shen Y."/>
            <person name="Chen Z."/>
            <person name="Yuan Z.-H."/>
            <person name="Zhao G.-P."/>
            <person name="Qu D."/>
            <person name="Danchin A."/>
            <person name="Wen Y.-M."/>
        </authorList>
    </citation>
    <scope>NUCLEOTIDE SEQUENCE [LARGE SCALE GENOMIC DNA]</scope>
    <source>
        <strain>ATCC 12228 / FDA PCI 1200</strain>
    </source>
</reference>
<sequence>MLKKILLSLVVFYQRFISPLTPPTCRFYPTCSQYTREAIEYHGALKGLYLGVRRILKCHPLHKGGFDPVPLKKDKNSKTTHHH</sequence>